<keyword id="KW-0963">Cytoplasm</keyword>
<evidence type="ECO:0000255" key="1">
    <source>
        <dbReference type="HAMAP-Rule" id="MF_00611"/>
    </source>
</evidence>
<sequence length="309" mass="34719">MSIRIIPQDELGSSEKRTADMIPPLLFPRLKNLYNRRAERLRELAENNPLGDYLRFAALIAHAQEVVLYDHPLEMDLTTRIKEASAQGKPPLDIHVLPRDKHWQKLLMALIAELKPEMSGPALAVIENLEKASTQELEDMASALFASDFSSVSSDKAPFIWAALSLYWAQMANLIPGKARAEYGEQRQYCPVCGSMPVSSMVQIGTTQGLRYLHCNLCETEWHVVRVKCSNCEQSGKLHYWSLDDEQAAIKAESCDDCGTYLKILYQEKEPKVEAVADDLASLVLDARMEQEGYARSSINPFLFPGEGE</sequence>
<name>FDHE_ECOLU</name>
<reference key="1">
    <citation type="journal article" date="2009" name="PLoS Genet.">
        <title>Organised genome dynamics in the Escherichia coli species results in highly diverse adaptive paths.</title>
        <authorList>
            <person name="Touchon M."/>
            <person name="Hoede C."/>
            <person name="Tenaillon O."/>
            <person name="Barbe V."/>
            <person name="Baeriswyl S."/>
            <person name="Bidet P."/>
            <person name="Bingen E."/>
            <person name="Bonacorsi S."/>
            <person name="Bouchier C."/>
            <person name="Bouvet O."/>
            <person name="Calteau A."/>
            <person name="Chiapello H."/>
            <person name="Clermont O."/>
            <person name="Cruveiller S."/>
            <person name="Danchin A."/>
            <person name="Diard M."/>
            <person name="Dossat C."/>
            <person name="Karoui M.E."/>
            <person name="Frapy E."/>
            <person name="Garry L."/>
            <person name="Ghigo J.M."/>
            <person name="Gilles A.M."/>
            <person name="Johnson J."/>
            <person name="Le Bouguenec C."/>
            <person name="Lescat M."/>
            <person name="Mangenot S."/>
            <person name="Martinez-Jehanne V."/>
            <person name="Matic I."/>
            <person name="Nassif X."/>
            <person name="Oztas S."/>
            <person name="Petit M.A."/>
            <person name="Pichon C."/>
            <person name="Rouy Z."/>
            <person name="Ruf C.S."/>
            <person name="Schneider D."/>
            <person name="Tourret J."/>
            <person name="Vacherie B."/>
            <person name="Vallenet D."/>
            <person name="Medigue C."/>
            <person name="Rocha E.P.C."/>
            <person name="Denamur E."/>
        </authorList>
    </citation>
    <scope>NUCLEOTIDE SEQUENCE [LARGE SCALE GENOMIC DNA]</scope>
    <source>
        <strain>UMN026 / ExPEC</strain>
    </source>
</reference>
<protein>
    <recommendedName>
        <fullName evidence="1">Protein FdhE</fullName>
    </recommendedName>
</protein>
<feature type="chain" id="PRO_1000130358" description="Protein FdhE">
    <location>
        <begin position="1"/>
        <end position="309"/>
    </location>
</feature>
<comment type="function">
    <text evidence="1">Necessary for formate dehydrogenase activity.</text>
</comment>
<comment type="subcellular location">
    <subcellularLocation>
        <location evidence="1">Cytoplasm</location>
    </subcellularLocation>
</comment>
<comment type="similarity">
    <text evidence="1">Belongs to the FdhE family.</text>
</comment>
<accession>B7NFJ2</accession>
<proteinExistence type="inferred from homology"/>
<gene>
    <name evidence="1" type="primary">fdhE</name>
    <name type="ordered locus">ECUMN_4421</name>
</gene>
<dbReference type="EMBL" id="CU928163">
    <property type="protein sequence ID" value="CAR15548.1"/>
    <property type="molecule type" value="Genomic_DNA"/>
</dbReference>
<dbReference type="RefSeq" id="WP_000027720.1">
    <property type="nucleotide sequence ID" value="NC_011751.1"/>
</dbReference>
<dbReference type="RefSeq" id="YP_002415039.1">
    <property type="nucleotide sequence ID" value="NC_011751.1"/>
</dbReference>
<dbReference type="SMR" id="B7NFJ2"/>
<dbReference type="STRING" id="585056.ECUMN_4421"/>
<dbReference type="KEGG" id="eum:ECUMN_4421"/>
<dbReference type="PATRIC" id="fig|585056.7.peg.4590"/>
<dbReference type="HOGENOM" id="CLU_055275_0_0_6"/>
<dbReference type="Proteomes" id="UP000007097">
    <property type="component" value="Chromosome"/>
</dbReference>
<dbReference type="GO" id="GO:0005829">
    <property type="term" value="C:cytosol"/>
    <property type="evidence" value="ECO:0007669"/>
    <property type="project" value="TreeGrafter"/>
</dbReference>
<dbReference type="GO" id="GO:0008199">
    <property type="term" value="F:ferric iron binding"/>
    <property type="evidence" value="ECO:0007669"/>
    <property type="project" value="TreeGrafter"/>
</dbReference>
<dbReference type="GO" id="GO:0051604">
    <property type="term" value="P:protein maturation"/>
    <property type="evidence" value="ECO:0007669"/>
    <property type="project" value="TreeGrafter"/>
</dbReference>
<dbReference type="CDD" id="cd16341">
    <property type="entry name" value="FdhE"/>
    <property type="match status" value="1"/>
</dbReference>
<dbReference type="FunFam" id="3.90.1670.10:FF:000001">
    <property type="entry name" value="Protein FdhE"/>
    <property type="match status" value="1"/>
</dbReference>
<dbReference type="Gene3D" id="3.90.1670.10">
    <property type="entry name" value="FdhE-like domain"/>
    <property type="match status" value="1"/>
</dbReference>
<dbReference type="HAMAP" id="MF_00611">
    <property type="entry name" value="FdeH"/>
    <property type="match status" value="1"/>
</dbReference>
<dbReference type="InterPro" id="IPR024064">
    <property type="entry name" value="FdhE-like_sf"/>
</dbReference>
<dbReference type="InterPro" id="IPR056796">
    <property type="entry name" value="FdhE_C"/>
</dbReference>
<dbReference type="InterPro" id="IPR056797">
    <property type="entry name" value="FdhE_central"/>
</dbReference>
<dbReference type="InterPro" id="IPR056774">
    <property type="entry name" value="FdhE_N"/>
</dbReference>
<dbReference type="InterPro" id="IPR006452">
    <property type="entry name" value="Formate_DH_accessory"/>
</dbReference>
<dbReference type="NCBIfam" id="TIGR01562">
    <property type="entry name" value="FdhE"/>
    <property type="match status" value="1"/>
</dbReference>
<dbReference type="NCBIfam" id="NF002925">
    <property type="entry name" value="PRK03564.1"/>
    <property type="match status" value="1"/>
</dbReference>
<dbReference type="PANTHER" id="PTHR37689">
    <property type="entry name" value="PROTEIN FDHE"/>
    <property type="match status" value="1"/>
</dbReference>
<dbReference type="PANTHER" id="PTHR37689:SF1">
    <property type="entry name" value="PROTEIN FDHE"/>
    <property type="match status" value="1"/>
</dbReference>
<dbReference type="Pfam" id="PF24860">
    <property type="entry name" value="FdhE_C"/>
    <property type="match status" value="1"/>
</dbReference>
<dbReference type="Pfam" id="PF24859">
    <property type="entry name" value="FdhE_central"/>
    <property type="match status" value="1"/>
</dbReference>
<dbReference type="Pfam" id="PF04216">
    <property type="entry name" value="FdhE_N"/>
    <property type="match status" value="1"/>
</dbReference>
<dbReference type="PIRSF" id="PIRSF018296">
    <property type="entry name" value="Format_dh_formtn"/>
    <property type="match status" value="1"/>
</dbReference>
<dbReference type="SUPFAM" id="SSF144020">
    <property type="entry name" value="FdhE-like"/>
    <property type="match status" value="1"/>
</dbReference>
<organism>
    <name type="scientific">Escherichia coli O17:K52:H18 (strain UMN026 / ExPEC)</name>
    <dbReference type="NCBI Taxonomy" id="585056"/>
    <lineage>
        <taxon>Bacteria</taxon>
        <taxon>Pseudomonadati</taxon>
        <taxon>Pseudomonadota</taxon>
        <taxon>Gammaproteobacteria</taxon>
        <taxon>Enterobacterales</taxon>
        <taxon>Enterobacteriaceae</taxon>
        <taxon>Escherichia</taxon>
    </lineage>
</organism>